<gene>
    <name evidence="1" type="primary">obg</name>
    <name type="synonym">cgtA</name>
    <name type="ordered locus">CC_0315</name>
</gene>
<comment type="function">
    <text evidence="1">An essential GTPase which binds GTP, GDP and possibly (p)ppGpp with moderate affinity, with high nucleotide exchange rates and a fairly low GTP hydrolysis rate. Plays a role in control of the cell cycle, stress response, ribosome biogenesis and in those bacteria that undergo differentiation, in morphogenesis control.</text>
</comment>
<comment type="cofactor">
    <cofactor evidence="1">
        <name>Mg(2+)</name>
        <dbReference type="ChEBI" id="CHEBI:18420"/>
    </cofactor>
</comment>
<comment type="subunit">
    <text evidence="1">Monomer.</text>
</comment>
<comment type="subcellular location">
    <subcellularLocation>
        <location evidence="1">Cytoplasm</location>
    </subcellularLocation>
</comment>
<comment type="similarity">
    <text evidence="1">Belongs to the TRAFAC class OBG-HflX-like GTPase superfamily. OBG GTPase family.</text>
</comment>
<evidence type="ECO:0000255" key="1">
    <source>
        <dbReference type="HAMAP-Rule" id="MF_01454"/>
    </source>
</evidence>
<evidence type="ECO:0000255" key="2">
    <source>
        <dbReference type="PROSITE-ProRule" id="PRU01231"/>
    </source>
</evidence>
<evidence type="ECO:0000256" key="3">
    <source>
        <dbReference type="SAM" id="MobiDB-lite"/>
    </source>
</evidence>
<organism>
    <name type="scientific">Caulobacter vibrioides (strain ATCC 19089 / CIP 103742 / CB 15)</name>
    <name type="common">Caulobacter crescentus</name>
    <dbReference type="NCBI Taxonomy" id="190650"/>
    <lineage>
        <taxon>Bacteria</taxon>
        <taxon>Pseudomonadati</taxon>
        <taxon>Pseudomonadota</taxon>
        <taxon>Alphaproteobacteria</taxon>
        <taxon>Caulobacterales</taxon>
        <taxon>Caulobacteraceae</taxon>
        <taxon>Caulobacter</taxon>
    </lineage>
</organism>
<feature type="chain" id="PRO_0000385809" description="GTPase Obg">
    <location>
        <begin position="1"/>
        <end position="354"/>
    </location>
</feature>
<feature type="domain" description="Obg" evidence="2">
    <location>
        <begin position="1"/>
        <end position="159"/>
    </location>
</feature>
<feature type="domain" description="OBG-type G" evidence="1">
    <location>
        <begin position="160"/>
        <end position="328"/>
    </location>
</feature>
<feature type="region of interest" description="Disordered" evidence="3">
    <location>
        <begin position="335"/>
        <end position="354"/>
    </location>
</feature>
<feature type="compositionally biased region" description="Acidic residues" evidence="3">
    <location>
        <begin position="335"/>
        <end position="345"/>
    </location>
</feature>
<feature type="binding site" evidence="1">
    <location>
        <begin position="166"/>
        <end position="173"/>
    </location>
    <ligand>
        <name>GTP</name>
        <dbReference type="ChEBI" id="CHEBI:37565"/>
    </ligand>
</feature>
<feature type="binding site" evidence="1">
    <location>
        <position position="173"/>
    </location>
    <ligand>
        <name>Mg(2+)</name>
        <dbReference type="ChEBI" id="CHEBI:18420"/>
    </ligand>
</feature>
<feature type="binding site" evidence="1">
    <location>
        <begin position="191"/>
        <end position="195"/>
    </location>
    <ligand>
        <name>GTP</name>
        <dbReference type="ChEBI" id="CHEBI:37565"/>
    </ligand>
</feature>
<feature type="binding site" evidence="1">
    <location>
        <position position="193"/>
    </location>
    <ligand>
        <name>Mg(2+)</name>
        <dbReference type="ChEBI" id="CHEBI:18420"/>
    </ligand>
</feature>
<feature type="binding site" evidence="1">
    <location>
        <begin position="213"/>
        <end position="216"/>
    </location>
    <ligand>
        <name>GTP</name>
        <dbReference type="ChEBI" id="CHEBI:37565"/>
    </ligand>
</feature>
<feature type="binding site" evidence="1">
    <location>
        <begin position="280"/>
        <end position="283"/>
    </location>
    <ligand>
        <name>GTP</name>
        <dbReference type="ChEBI" id="CHEBI:37565"/>
    </ligand>
</feature>
<feature type="binding site" evidence="1">
    <location>
        <begin position="309"/>
        <end position="311"/>
    </location>
    <ligand>
        <name>GTP</name>
        <dbReference type="ChEBI" id="CHEBI:37565"/>
    </ligand>
</feature>
<accession>P0CB41</accession>
<accession>O30861</accession>
<accession>Q7DB40</accession>
<sequence length="354" mass="37871">MKFLDQCKIYIRSGNGGGGSVSFRREKYIEYGGPDGGDGGRGGDVWIEAVEGLNTLIDYRYQQHFKAGTGVHGMGRARHGAAGEDVVLKVPVGTEVLEEDKETLIADLDHAGMRLLLAKGGNGGWGNLHFKGPVNQAPKYANPGQEGEERWIWLRLKLIADVGLVGLPNAGKSTFLAAASAAKPKIADYPFTTLTPNLGVVDLSSSERFVLADIPGLIEGASEGAGLGTRFLGHVERSATLIHLIDATQDDVAGAYETIRGELEAYGDELADKAEILALNKIDALDEETLAEKVAELEAVSGIKPRLVSGVSGQGVTELLRAAYKQVRIRRGDLEEEIDDDEDHVDETPGGWTP</sequence>
<dbReference type="EC" id="3.6.5.-" evidence="1"/>
<dbReference type="EMBL" id="AE005673">
    <property type="protein sequence ID" value="AAK22302.1"/>
    <property type="molecule type" value="Genomic_DNA"/>
</dbReference>
<dbReference type="PIR" id="B87288">
    <property type="entry name" value="B87288"/>
</dbReference>
<dbReference type="RefSeq" id="NP_419134.1">
    <property type="nucleotide sequence ID" value="NC_002696.2"/>
</dbReference>
<dbReference type="RefSeq" id="WP_010918204.1">
    <property type="nucleotide sequence ID" value="NC_002696.2"/>
</dbReference>
<dbReference type="SMR" id="P0CB41"/>
<dbReference type="STRING" id="190650.CC_0315"/>
<dbReference type="EnsemblBacteria" id="AAK22302">
    <property type="protein sequence ID" value="AAK22302"/>
    <property type="gene ID" value="CC_0315"/>
</dbReference>
<dbReference type="KEGG" id="ccr:CC_0315"/>
<dbReference type="PATRIC" id="fig|190650.5.peg.314"/>
<dbReference type="eggNOG" id="COG0536">
    <property type="taxonomic scope" value="Bacteria"/>
</dbReference>
<dbReference type="HOGENOM" id="CLU_011747_2_0_5"/>
<dbReference type="BioCyc" id="CAULO:CC0315-MONOMER"/>
<dbReference type="Proteomes" id="UP000001816">
    <property type="component" value="Chromosome"/>
</dbReference>
<dbReference type="GO" id="GO:0005737">
    <property type="term" value="C:cytoplasm"/>
    <property type="evidence" value="ECO:0007669"/>
    <property type="project" value="UniProtKB-SubCell"/>
</dbReference>
<dbReference type="GO" id="GO:0005525">
    <property type="term" value="F:GTP binding"/>
    <property type="evidence" value="ECO:0007669"/>
    <property type="project" value="UniProtKB-UniRule"/>
</dbReference>
<dbReference type="GO" id="GO:0003924">
    <property type="term" value="F:GTPase activity"/>
    <property type="evidence" value="ECO:0007669"/>
    <property type="project" value="UniProtKB-UniRule"/>
</dbReference>
<dbReference type="GO" id="GO:0000287">
    <property type="term" value="F:magnesium ion binding"/>
    <property type="evidence" value="ECO:0007669"/>
    <property type="project" value="InterPro"/>
</dbReference>
<dbReference type="GO" id="GO:0042254">
    <property type="term" value="P:ribosome biogenesis"/>
    <property type="evidence" value="ECO:0007669"/>
    <property type="project" value="UniProtKB-UniRule"/>
</dbReference>
<dbReference type="CDD" id="cd01898">
    <property type="entry name" value="Obg"/>
    <property type="match status" value="1"/>
</dbReference>
<dbReference type="FunFam" id="2.70.210.12:FF:000001">
    <property type="entry name" value="GTPase Obg"/>
    <property type="match status" value="1"/>
</dbReference>
<dbReference type="Gene3D" id="2.70.210.12">
    <property type="entry name" value="GTP1/OBG domain"/>
    <property type="match status" value="1"/>
</dbReference>
<dbReference type="Gene3D" id="3.40.50.300">
    <property type="entry name" value="P-loop containing nucleotide triphosphate hydrolases"/>
    <property type="match status" value="1"/>
</dbReference>
<dbReference type="HAMAP" id="MF_01454">
    <property type="entry name" value="GTPase_Obg"/>
    <property type="match status" value="1"/>
</dbReference>
<dbReference type="InterPro" id="IPR031167">
    <property type="entry name" value="G_OBG"/>
</dbReference>
<dbReference type="InterPro" id="IPR006073">
    <property type="entry name" value="GTP-bd"/>
</dbReference>
<dbReference type="InterPro" id="IPR014100">
    <property type="entry name" value="GTP-bd_Obg/CgtA"/>
</dbReference>
<dbReference type="InterPro" id="IPR006074">
    <property type="entry name" value="GTP1-OBG_CS"/>
</dbReference>
<dbReference type="InterPro" id="IPR006169">
    <property type="entry name" value="GTP1_OBG_dom"/>
</dbReference>
<dbReference type="InterPro" id="IPR036726">
    <property type="entry name" value="GTP1_OBG_dom_sf"/>
</dbReference>
<dbReference type="InterPro" id="IPR045086">
    <property type="entry name" value="OBG_GTPase"/>
</dbReference>
<dbReference type="InterPro" id="IPR027417">
    <property type="entry name" value="P-loop_NTPase"/>
</dbReference>
<dbReference type="NCBIfam" id="TIGR02729">
    <property type="entry name" value="Obg_CgtA"/>
    <property type="match status" value="1"/>
</dbReference>
<dbReference type="NCBIfam" id="NF008955">
    <property type="entry name" value="PRK12297.1"/>
    <property type="match status" value="1"/>
</dbReference>
<dbReference type="NCBIfam" id="NF008956">
    <property type="entry name" value="PRK12299.1"/>
    <property type="match status" value="1"/>
</dbReference>
<dbReference type="PANTHER" id="PTHR11702">
    <property type="entry name" value="DEVELOPMENTALLY REGULATED GTP-BINDING PROTEIN-RELATED"/>
    <property type="match status" value="1"/>
</dbReference>
<dbReference type="PANTHER" id="PTHR11702:SF31">
    <property type="entry name" value="MITOCHONDRIAL RIBOSOME-ASSOCIATED GTPASE 2"/>
    <property type="match status" value="1"/>
</dbReference>
<dbReference type="Pfam" id="PF01018">
    <property type="entry name" value="GTP1_OBG"/>
    <property type="match status" value="1"/>
</dbReference>
<dbReference type="Pfam" id="PF01926">
    <property type="entry name" value="MMR_HSR1"/>
    <property type="match status" value="1"/>
</dbReference>
<dbReference type="PIRSF" id="PIRSF002401">
    <property type="entry name" value="GTP_bd_Obg/CgtA"/>
    <property type="match status" value="1"/>
</dbReference>
<dbReference type="PRINTS" id="PR00326">
    <property type="entry name" value="GTP1OBG"/>
</dbReference>
<dbReference type="SUPFAM" id="SSF82051">
    <property type="entry name" value="Obg GTP-binding protein N-terminal domain"/>
    <property type="match status" value="1"/>
</dbReference>
<dbReference type="SUPFAM" id="SSF52540">
    <property type="entry name" value="P-loop containing nucleoside triphosphate hydrolases"/>
    <property type="match status" value="1"/>
</dbReference>
<dbReference type="PROSITE" id="PS51710">
    <property type="entry name" value="G_OBG"/>
    <property type="match status" value="1"/>
</dbReference>
<dbReference type="PROSITE" id="PS00905">
    <property type="entry name" value="GTP1_OBG"/>
    <property type="match status" value="1"/>
</dbReference>
<dbReference type="PROSITE" id="PS51883">
    <property type="entry name" value="OBG"/>
    <property type="match status" value="1"/>
</dbReference>
<protein>
    <recommendedName>
        <fullName evidence="1">GTPase Obg</fullName>
        <ecNumber evidence="1">3.6.5.-</ecNumber>
    </recommendedName>
    <alternativeName>
        <fullName evidence="1">GTP-binding protein Obg</fullName>
    </alternativeName>
</protein>
<keyword id="KW-0963">Cytoplasm</keyword>
<keyword id="KW-0342">GTP-binding</keyword>
<keyword id="KW-0378">Hydrolase</keyword>
<keyword id="KW-0460">Magnesium</keyword>
<keyword id="KW-0479">Metal-binding</keyword>
<keyword id="KW-0547">Nucleotide-binding</keyword>
<keyword id="KW-1185">Reference proteome</keyword>
<reference key="1">
    <citation type="journal article" date="2001" name="Proc. Natl. Acad. Sci. U.S.A.">
        <title>Complete genome sequence of Caulobacter crescentus.</title>
        <authorList>
            <person name="Nierman W.C."/>
            <person name="Feldblyum T.V."/>
            <person name="Laub M.T."/>
            <person name="Paulsen I.T."/>
            <person name="Nelson K.E."/>
            <person name="Eisen J.A."/>
            <person name="Heidelberg J.F."/>
            <person name="Alley M.R.K."/>
            <person name="Ohta N."/>
            <person name="Maddock J.R."/>
            <person name="Potocka I."/>
            <person name="Nelson W.C."/>
            <person name="Newton A."/>
            <person name="Stephens C."/>
            <person name="Phadke N.D."/>
            <person name="Ely B."/>
            <person name="DeBoy R.T."/>
            <person name="Dodson R.J."/>
            <person name="Durkin A.S."/>
            <person name="Gwinn M.L."/>
            <person name="Haft D.H."/>
            <person name="Kolonay J.F."/>
            <person name="Smit J."/>
            <person name="Craven M.B."/>
            <person name="Khouri H.M."/>
            <person name="Shetty J."/>
            <person name="Berry K.J."/>
            <person name="Utterback T.R."/>
            <person name="Tran K."/>
            <person name="Wolf A.M."/>
            <person name="Vamathevan J.J."/>
            <person name="Ermolaeva M.D."/>
            <person name="White O."/>
            <person name="Salzberg S.L."/>
            <person name="Venter J.C."/>
            <person name="Shapiro L."/>
            <person name="Fraser C.M."/>
        </authorList>
    </citation>
    <scope>NUCLEOTIDE SEQUENCE [LARGE SCALE GENOMIC DNA]</scope>
    <source>
        <strain>ATCC 19089 / CIP 103742 / CB 15</strain>
    </source>
</reference>
<name>OBG_CAUVC</name>
<proteinExistence type="inferred from homology"/>